<organism>
    <name type="scientific">Candida glabrata (strain ATCC 2001 / BCRC 20586 / JCM 3761 / NBRC 0622 / NRRL Y-65 / CBS 138)</name>
    <name type="common">Yeast</name>
    <name type="synonym">Nakaseomyces glabratus</name>
    <dbReference type="NCBI Taxonomy" id="284593"/>
    <lineage>
        <taxon>Eukaryota</taxon>
        <taxon>Fungi</taxon>
        <taxon>Dikarya</taxon>
        <taxon>Ascomycota</taxon>
        <taxon>Saccharomycotina</taxon>
        <taxon>Saccharomycetes</taxon>
        <taxon>Saccharomycetales</taxon>
        <taxon>Saccharomycetaceae</taxon>
        <taxon>Nakaseomyces</taxon>
    </lineage>
</organism>
<protein>
    <recommendedName>
        <fullName evidence="6">PDR1 up-regulated protein 1</fullName>
    </recommendedName>
</protein>
<dbReference type="EMBL" id="CR380959">
    <property type="protein sequence ID" value="CAG62886.1"/>
    <property type="molecule type" value="Genomic_DNA"/>
</dbReference>
<dbReference type="RefSeq" id="XP_449906.1">
    <property type="nucleotide sequence ID" value="XM_449906.1"/>
</dbReference>
<dbReference type="STRING" id="284593.Q6FIN8"/>
<dbReference type="EnsemblFungi" id="CAGL0M12947g-T">
    <property type="protein sequence ID" value="CAGL0M12947g-T-p1"/>
    <property type="gene ID" value="CAGL0M12947g"/>
</dbReference>
<dbReference type="GeneID" id="2891196"/>
<dbReference type="KEGG" id="cgr:2891196"/>
<dbReference type="CGD" id="CAL0136385">
    <property type="gene designation" value="PUP1"/>
</dbReference>
<dbReference type="VEuPathDB" id="FungiDB:B1J91_M12947g"/>
<dbReference type="VEuPathDB" id="FungiDB:CAGL0M12947g"/>
<dbReference type="eggNOG" id="ENOG502S01E">
    <property type="taxonomic scope" value="Eukaryota"/>
</dbReference>
<dbReference type="HOGENOM" id="CLU_1304705_0_0_1"/>
<dbReference type="InParanoid" id="Q6FIN8"/>
<dbReference type="Proteomes" id="UP000002428">
    <property type="component" value="Chromosome M"/>
</dbReference>
<dbReference type="GO" id="GO:0031966">
    <property type="term" value="C:mitochondrial membrane"/>
    <property type="evidence" value="ECO:0007669"/>
    <property type="project" value="UniProtKB-SubCell"/>
</dbReference>
<dbReference type="GO" id="GO:0005739">
    <property type="term" value="C:mitochondrion"/>
    <property type="evidence" value="ECO:0000314"/>
    <property type="project" value="CGD"/>
</dbReference>
<dbReference type="InterPro" id="IPR012470">
    <property type="entry name" value="Pup1-like"/>
</dbReference>
<dbReference type="Pfam" id="PF07954">
    <property type="entry name" value="DUF1689"/>
    <property type="match status" value="1"/>
</dbReference>
<reference key="1">
    <citation type="journal article" date="2004" name="Nature">
        <title>Genome evolution in yeasts.</title>
        <authorList>
            <person name="Dujon B."/>
            <person name="Sherman D."/>
            <person name="Fischer G."/>
            <person name="Durrens P."/>
            <person name="Casaregola S."/>
            <person name="Lafontaine I."/>
            <person name="de Montigny J."/>
            <person name="Marck C."/>
            <person name="Neuveglise C."/>
            <person name="Talla E."/>
            <person name="Goffard N."/>
            <person name="Frangeul L."/>
            <person name="Aigle M."/>
            <person name="Anthouard V."/>
            <person name="Babour A."/>
            <person name="Barbe V."/>
            <person name="Barnay S."/>
            <person name="Blanchin S."/>
            <person name="Beckerich J.-M."/>
            <person name="Beyne E."/>
            <person name="Bleykasten C."/>
            <person name="Boisrame A."/>
            <person name="Boyer J."/>
            <person name="Cattolico L."/>
            <person name="Confanioleri F."/>
            <person name="de Daruvar A."/>
            <person name="Despons L."/>
            <person name="Fabre E."/>
            <person name="Fairhead C."/>
            <person name="Ferry-Dumazet H."/>
            <person name="Groppi A."/>
            <person name="Hantraye F."/>
            <person name="Hennequin C."/>
            <person name="Jauniaux N."/>
            <person name="Joyet P."/>
            <person name="Kachouri R."/>
            <person name="Kerrest A."/>
            <person name="Koszul R."/>
            <person name="Lemaire M."/>
            <person name="Lesur I."/>
            <person name="Ma L."/>
            <person name="Muller H."/>
            <person name="Nicaud J.-M."/>
            <person name="Nikolski M."/>
            <person name="Oztas S."/>
            <person name="Ozier-Kalogeropoulos O."/>
            <person name="Pellenz S."/>
            <person name="Potier S."/>
            <person name="Richard G.-F."/>
            <person name="Straub M.-L."/>
            <person name="Suleau A."/>
            <person name="Swennen D."/>
            <person name="Tekaia F."/>
            <person name="Wesolowski-Louvel M."/>
            <person name="Westhof E."/>
            <person name="Wirth B."/>
            <person name="Zeniou-Meyer M."/>
            <person name="Zivanovic Y."/>
            <person name="Bolotin-Fukuhara M."/>
            <person name="Thierry A."/>
            <person name="Bouchier C."/>
            <person name="Caudron B."/>
            <person name="Scarpelli C."/>
            <person name="Gaillardin C."/>
            <person name="Weissenbach J."/>
            <person name="Wincker P."/>
            <person name="Souciet J.-L."/>
        </authorList>
    </citation>
    <scope>NUCLEOTIDE SEQUENCE [LARGE SCALE GENOMIC DNA]</scope>
    <source>
        <strain>ATCC 2001 / BCRC 20586 / JCM 3761 / NBRC 0622 / NRRL Y-65 / CBS 138</strain>
    </source>
</reference>
<reference key="2">
    <citation type="journal article" date="2011" name="PLoS ONE">
        <title>Contribution of CgPDR1-regulated genes in enhanced virulence of azole-resistant Candida glabrata.</title>
        <authorList>
            <person name="Ferrari S."/>
            <person name="Sanguinetti M."/>
            <person name="Torelli R."/>
            <person name="Posteraro B."/>
            <person name="Sanglard D."/>
        </authorList>
    </citation>
    <scope>FUNCTION</scope>
    <scope>INDUCTION</scope>
    <scope>SUBCELLULAR LOCATION</scope>
    <scope>DISRUPTION PHENOTYPE</scope>
</reference>
<reference key="3">
    <citation type="journal article" date="2013" name="Infect. Immun.">
        <title>Gain-of-function mutations in PDR1, a regulator of antifungal drug resistance in Candida glabrata, control adherence to host cells.</title>
        <authorList>
            <person name="Vale-Silva L."/>
            <person name="Ischer F."/>
            <person name="Leibundgut-Landmann S."/>
            <person name="Sanglard D."/>
        </authorList>
    </citation>
    <scope>FUNCTION</scope>
    <scope>DISRUPTION PHENOTYPE</scope>
</reference>
<reference key="4">
    <citation type="journal article" date="2014" name="Antimicrob. Agents Chemother.">
        <title>Identification of genomic binding sites for Candida glabrata Pdr1 transcription factor in wild-type and rho0 cells.</title>
        <authorList>
            <person name="Paul S."/>
            <person name="Bair T.B."/>
            <person name="Moye-Rowley W.S."/>
        </authorList>
    </citation>
    <scope>INDUCTION</scope>
</reference>
<reference key="5">
    <citation type="journal article" date="2018" name="FEMS Yeast Res.">
        <title>Sequence modification of the master regulator Pdr1 interferes with its transcriptional autoregulation and confers altered azole resistance in Candida glabrata.</title>
        <authorList>
            <person name="Tian Y."/>
            <person name="Gao N."/>
            <person name="Ni Q."/>
            <person name="Mao Y."/>
            <person name="Dong D."/>
            <person name="Huang X."/>
            <person name="Jiang C."/>
            <person name="Li Z."/>
            <person name="Zhang L."/>
            <person name="Wang X."/>
            <person name="Peng Y."/>
            <person name="Chen C."/>
        </authorList>
    </citation>
    <scope>INDUCTION</scope>
</reference>
<name>PUP1_CANGA</name>
<accession>Q6FIN8</accession>
<proteinExistence type="evidence at transcript level"/>
<comment type="function">
    <text evidence="2 3">Mitochondrial protein that contributes to the enhanced virulence of C.glabrata strains that acquired azole resistance.</text>
</comment>
<comment type="subcellular location">
    <subcellularLocation>
        <location evidence="2">Mitochondrion membrane</location>
        <topology evidence="1">Multi-pass membrane protein</topology>
    </subcellularLocation>
</comment>
<comment type="induction">
    <text evidence="2 4 5">Expression is inducible by fluconazole (PubMed:21408004). Expression is positively regulated by the master transcriptional regulator PDR1 which probably binds the PDRE motifs TCCACGGA (positions -770 to -763) and TCCGTGGA (positions -740 to -733) of its promoter (PubMed:21408004, PubMed:25199772, PubMed:29648590).</text>
</comment>
<comment type="disruption phenotype">
    <text evidence="3">Leads to an increase in phagocytosis but does not influence binding to host macrophages in infected mice, when the pleiotropic ABC efflux transporter of multiple drugs CDR1 is also deleted.</text>
</comment>
<comment type="similarity">
    <text>Belongs to the PUP1 family.</text>
</comment>
<sequence length="211" mass="24379">MSDSREIKKPWWFKKAKEWADEFYTRDQKLEDSDRRDLSKKYATISKASVVGAATGLSAGLGGPYAYRYYTTGALKGVKLPRTILLGVVSMVIMRNVAAKIAWDKELKKLDPSGELKQNYKSAHKTVDDVSLSDNSTSVQKKYGMMKFLKYRTAPRWAMYFEGTYQHPDRKFPNPDQMVQDLKGSRRAFPPFFSKADKFWHQIDRKDNDHT</sequence>
<gene>
    <name evidence="6" type="primary">PUP1</name>
    <name type="ordered locus">CAGL0M12947g</name>
</gene>
<keyword id="KW-0472">Membrane</keyword>
<keyword id="KW-0496">Mitochondrion</keyword>
<keyword id="KW-1185">Reference proteome</keyword>
<keyword id="KW-0812">Transmembrane</keyword>
<keyword id="KW-1133">Transmembrane helix</keyword>
<keyword id="KW-0843">Virulence</keyword>
<evidence type="ECO:0000255" key="1"/>
<evidence type="ECO:0000269" key="2">
    <source>
    </source>
</evidence>
<evidence type="ECO:0000269" key="3">
    <source>
    </source>
</evidence>
<evidence type="ECO:0000269" key="4">
    <source>
    </source>
</evidence>
<evidence type="ECO:0000269" key="5">
    <source>
    </source>
</evidence>
<evidence type="ECO:0000303" key="6">
    <source>
    </source>
</evidence>
<feature type="chain" id="PRO_0000445083" description="PDR1 up-regulated protein 1">
    <location>
        <begin position="1"/>
        <end position="211"/>
    </location>
</feature>
<feature type="transmembrane region" description="Helical" evidence="1">
    <location>
        <begin position="45"/>
        <end position="67"/>
    </location>
</feature>
<feature type="transmembrane region" description="Helical" evidence="1">
    <location>
        <begin position="82"/>
        <end position="99"/>
    </location>
</feature>